<name>CAH1_HUMAN</name>
<sequence length="261" mass="28870">MASPDWGYDDKNGPEQWSKLYPIANGNNQSPVDIKTSETKHDTSLKPISVSYNPATAKEIINVGHSFHVNFEDNDNRSVLKGGPFSDSYRLFQFHFHWGSTNEHGSEHTVDGVKYSAELHVAHWNSAKYSSLAEAASKADGLAVIGVLMKVGEANPKLQKVLDALQAIKTKGKRAPFTNFDPSTLLPSSLDFWTYPGSLTHPPLYESVTWIICKESISVSSEQLAQFRSLLSNVEGDNAVPMQHNNRPTQPLKGRTVRASF</sequence>
<keyword id="KW-0002">3D-structure</keyword>
<keyword id="KW-0007">Acetylation</keyword>
<keyword id="KW-0963">Cytoplasm</keyword>
<keyword id="KW-0903">Direct protein sequencing</keyword>
<keyword id="KW-0456">Lyase</keyword>
<keyword id="KW-0479">Metal-binding</keyword>
<keyword id="KW-1267">Proteomics identification</keyword>
<keyword id="KW-1185">Reference proteome</keyword>
<keyword id="KW-0862">Zinc</keyword>
<organism>
    <name type="scientific">Homo sapiens</name>
    <name type="common">Human</name>
    <dbReference type="NCBI Taxonomy" id="9606"/>
    <lineage>
        <taxon>Eukaryota</taxon>
        <taxon>Metazoa</taxon>
        <taxon>Chordata</taxon>
        <taxon>Craniata</taxon>
        <taxon>Vertebrata</taxon>
        <taxon>Euteleostomi</taxon>
        <taxon>Mammalia</taxon>
        <taxon>Eutheria</taxon>
        <taxon>Euarchontoglires</taxon>
        <taxon>Primates</taxon>
        <taxon>Haplorrhini</taxon>
        <taxon>Catarrhini</taxon>
        <taxon>Hominidae</taxon>
        <taxon>Homo</taxon>
    </lineage>
</organism>
<feature type="initiator methionine" description="Removed" evidence="19">
    <location>
        <position position="1"/>
    </location>
</feature>
<feature type="chain" id="PRO_0000077409" description="Carbonic anhydrase 1">
    <location>
        <begin position="2"/>
        <end position="261"/>
    </location>
</feature>
<feature type="domain" description="Alpha-carbonic anhydrase" evidence="3">
    <location>
        <begin position="4"/>
        <end position="261"/>
    </location>
</feature>
<feature type="region of interest" description="Disordered" evidence="4">
    <location>
        <begin position="1"/>
        <end position="31"/>
    </location>
</feature>
<feature type="region of interest" description="Disordered" evidence="4">
    <location>
        <begin position="241"/>
        <end position="261"/>
    </location>
</feature>
<feature type="active site" description="Proton donor/acceptor" evidence="2">
    <location>
        <position position="65"/>
    </location>
</feature>
<feature type="binding site" description="in variant Michigan-1" evidence="6">
    <location>
        <position position="65"/>
    </location>
    <ligand>
        <name>Zn(2+)</name>
        <dbReference type="ChEBI" id="CHEBI:29105"/>
        <label>2</label>
    </ligand>
</feature>
<feature type="binding site" description="in variant Michigan-1" evidence="6">
    <location>
        <position position="68"/>
    </location>
    <ligand>
        <name>Zn(2+)</name>
        <dbReference type="ChEBI" id="CHEBI:29105"/>
        <label>2</label>
    </ligand>
</feature>
<feature type="binding site" evidence="6 7 8 11 13 14 20 23 24 25">
    <location>
        <position position="95"/>
    </location>
    <ligand>
        <name>Zn(2+)</name>
        <dbReference type="ChEBI" id="CHEBI:29105"/>
        <label>1</label>
        <note>catalytic</note>
    </ligand>
</feature>
<feature type="binding site" evidence="6 7 8 11 13 14 20 23 24 25">
    <location>
        <position position="97"/>
    </location>
    <ligand>
        <name>Zn(2+)</name>
        <dbReference type="ChEBI" id="CHEBI:29105"/>
        <label>1</label>
        <note>catalytic</note>
    </ligand>
</feature>
<feature type="binding site" evidence="6 7 8 11 13 14 20 23 24 25">
    <location>
        <position position="120"/>
    </location>
    <ligand>
        <name>Zn(2+)</name>
        <dbReference type="ChEBI" id="CHEBI:29105"/>
        <label>1</label>
        <note>catalytic</note>
    </ligand>
</feature>
<feature type="binding site" evidence="2">
    <location>
        <begin position="200"/>
        <end position="201"/>
    </location>
    <ligand>
        <name>substrate</name>
    </ligand>
</feature>
<feature type="binding site" evidence="25">
    <location>
        <position position="200"/>
    </location>
    <ligand>
        <name>substrate</name>
    </ligand>
</feature>
<feature type="binding site" description="in variant Michigan-1" evidence="6">
    <location>
        <position position="201"/>
    </location>
    <ligand>
        <name>Zn(2+)</name>
        <dbReference type="ChEBI" id="CHEBI:29105"/>
        <label>2</label>
    </ligand>
</feature>
<feature type="modified residue" description="N-acetylalanine" evidence="18 19">
    <location>
        <position position="2"/>
    </location>
</feature>
<feature type="sequence variant" id="VAR_001378" description="In variant Michigan-1; confers enhanced esterase activity and an additional zinc binding site; dbSNP:rs990757234." evidence="6 22">
    <original>H</original>
    <variation>R</variation>
    <location>
        <position position="68"/>
    </location>
</feature>
<feature type="sequence variant" id="VAR_048679" description="In dbSNP:rs7821248.">
    <original>A</original>
    <variation>V</variation>
    <location>
        <position position="143"/>
    </location>
</feature>
<feature type="sequence variant" id="VAR_001379" description="In Guam; dbSNP:rs121909577." evidence="21">
    <original>G</original>
    <variation>R</variation>
    <location>
        <position position="254"/>
    </location>
</feature>
<feature type="sequence conflict" description="In Ref. 4; AA sequence and 5; AA sequence." evidence="26" ref="4 5">
    <original>DN</original>
    <variation>ND</variation>
    <location>
        <begin position="75"/>
        <end position="76"/>
    </location>
</feature>
<feature type="turn" evidence="29">
    <location>
        <begin position="10"/>
        <end position="12"/>
    </location>
</feature>
<feature type="turn" evidence="29">
    <location>
        <begin position="14"/>
        <end position="16"/>
    </location>
</feature>
<feature type="helix" evidence="29">
    <location>
        <begin position="17"/>
        <end position="19"/>
    </location>
</feature>
<feature type="helix" evidence="29">
    <location>
        <begin position="22"/>
        <end position="25"/>
    </location>
</feature>
<feature type="strand" evidence="29">
    <location>
        <begin position="26"/>
        <end position="28"/>
    </location>
</feature>
<feature type="strand" evidence="28">
    <location>
        <begin position="32"/>
        <end position="34"/>
    </location>
</feature>
<feature type="helix" evidence="29">
    <location>
        <begin position="36"/>
        <end position="38"/>
    </location>
</feature>
<feature type="strand" evidence="29">
    <location>
        <begin position="48"/>
        <end position="51"/>
    </location>
</feature>
<feature type="helix" evidence="29">
    <location>
        <begin position="54"/>
        <end position="56"/>
    </location>
</feature>
<feature type="strand" evidence="29">
    <location>
        <begin position="57"/>
        <end position="62"/>
    </location>
</feature>
<feature type="strand" evidence="29">
    <location>
        <begin position="64"/>
        <end position="71"/>
    </location>
</feature>
<feature type="strand" evidence="29">
    <location>
        <begin position="74"/>
        <end position="82"/>
    </location>
</feature>
<feature type="strand" evidence="29">
    <location>
        <begin position="89"/>
        <end position="98"/>
    </location>
</feature>
<feature type="strand" evidence="27">
    <location>
        <begin position="100"/>
        <end position="104"/>
    </location>
</feature>
<feature type="strand" evidence="29">
    <location>
        <begin position="107"/>
        <end position="110"/>
    </location>
</feature>
<feature type="strand" evidence="29">
    <location>
        <begin position="116"/>
        <end position="124"/>
    </location>
</feature>
<feature type="turn" evidence="29">
    <location>
        <begin position="126"/>
        <end position="128"/>
    </location>
</feature>
<feature type="helix" evidence="29">
    <location>
        <begin position="132"/>
        <end position="135"/>
    </location>
</feature>
<feature type="strand" evidence="29">
    <location>
        <begin position="141"/>
        <end position="153"/>
    </location>
</feature>
<feature type="helix" evidence="29">
    <location>
        <begin position="156"/>
        <end position="158"/>
    </location>
</feature>
<feature type="helix" evidence="29">
    <location>
        <begin position="159"/>
        <end position="164"/>
    </location>
</feature>
<feature type="helix" evidence="29">
    <location>
        <begin position="165"/>
        <end position="167"/>
    </location>
</feature>
<feature type="strand" evidence="29">
    <location>
        <begin position="174"/>
        <end position="176"/>
    </location>
</feature>
<feature type="helix" evidence="29">
    <location>
        <begin position="182"/>
        <end position="185"/>
    </location>
</feature>
<feature type="strand" evidence="29">
    <location>
        <begin position="192"/>
        <end position="197"/>
    </location>
</feature>
<feature type="strand" evidence="29">
    <location>
        <begin position="208"/>
        <end position="215"/>
    </location>
</feature>
<feature type="strand" evidence="29">
    <location>
        <begin position="217"/>
        <end position="219"/>
    </location>
</feature>
<feature type="helix" evidence="29">
    <location>
        <begin position="221"/>
        <end position="228"/>
    </location>
</feature>
<feature type="strand" evidence="29">
    <location>
        <begin position="230"/>
        <end position="233"/>
    </location>
</feature>
<proteinExistence type="evidence at protein level"/>
<comment type="function">
    <text evidence="5 8 9 10 12 13 14 15 16 17">Catalyzes the reversible hydration of carbon dioxide (PubMed:10550681, PubMed:16506782, PubMed:16686544, PubMed:16807956, PubMed:17127057, PubMed:17314045, PubMed:17407288, PubMed:18618712, PubMed:19186056, PubMed:19206230). Can hydrate cyanamide to urea (PubMed:10550681).</text>
</comment>
<comment type="catalytic activity">
    <reaction evidence="5 8 9 10 12 13 14 15 16 17">
        <text>hydrogencarbonate + H(+) = CO2 + H2O</text>
        <dbReference type="Rhea" id="RHEA:10748"/>
        <dbReference type="ChEBI" id="CHEBI:15377"/>
        <dbReference type="ChEBI" id="CHEBI:15378"/>
        <dbReference type="ChEBI" id="CHEBI:16526"/>
        <dbReference type="ChEBI" id="CHEBI:17544"/>
        <dbReference type="EC" id="4.2.1.1"/>
    </reaction>
</comment>
<comment type="catalytic activity">
    <reaction evidence="5">
        <text>urea = cyanamide + H2O</text>
        <dbReference type="Rhea" id="RHEA:23056"/>
        <dbReference type="ChEBI" id="CHEBI:15377"/>
        <dbReference type="ChEBI" id="CHEBI:16199"/>
        <dbReference type="ChEBI" id="CHEBI:16698"/>
        <dbReference type="EC" id="4.2.1.69"/>
    </reaction>
</comment>
<comment type="cofactor">
    <cofactor evidence="6 7 8 11 13 14 20 23 24 25">
        <name>Zn(2+)</name>
        <dbReference type="ChEBI" id="CHEBI:29105"/>
    </cofactor>
</comment>
<comment type="activity regulation">
    <text evidence="8 9 10 12 13 14 15 16 17">Activated by histamine, imidazole, L-adrenaline, L- and D-histidine, and L- and D-phenylalanine. Inhibited by coumarins, sulfonamide derivatives such as acetazolamide, benzenesulfonamide and derivatives (4-carboxyethylbenzene-sulfonamide, 4-carboxyethylbenzene-sulfonamide ethyl ester, 4-(acetyl-2-aminoethyl)benzene-sulfonamide, 4-aminoethylbenzene-sulfonamide), and 'prong inhibitors' BR15, BR17, BR22 and BR30. Activated by a short exposition to Foscarnet (phosphonoformate trisodium salt), but inhibited by a long one. Esterase activity weakly reduced by cyanamide.</text>
</comment>
<comment type="biophysicochemical properties">
    <kinetics>
        <KM evidence="5 15">4 mM for CO(2)</KM>
        <KM evidence="5 15">15 mM for 4-nitrophenyl acetate</KM>
    </kinetics>
</comment>
<comment type="interaction">
    <interactant intactId="EBI-3912102">
        <id>P00915</id>
    </interactant>
    <interactant intactId="EBI-717422">
        <id>Q12800</id>
        <label>TFCP2</label>
    </interactant>
    <organismsDiffer>false</organismsDiffer>
    <experiments>6</experiments>
</comment>
<comment type="subcellular location">
    <subcellularLocation>
        <location evidence="1">Cytoplasm</location>
    </subcellularLocation>
</comment>
<comment type="similarity">
    <text evidence="26">Belongs to the alpha-carbonic anhydrase family.</text>
</comment>
<dbReference type="EC" id="4.2.1.1" evidence="5 9 10 12 16 17"/>
<dbReference type="EC" id="4.2.1.69" evidence="5"/>
<dbReference type="EMBL" id="X05014">
    <property type="protein sequence ID" value="CAA28663.1"/>
    <property type="molecule type" value="mRNA"/>
</dbReference>
<dbReference type="EMBL" id="M33987">
    <property type="protein sequence ID" value="AAA51910.1"/>
    <property type="molecule type" value="mRNA"/>
</dbReference>
<dbReference type="EMBL" id="BC027890">
    <property type="protein sequence ID" value="AAH27890.1"/>
    <property type="molecule type" value="mRNA"/>
</dbReference>
<dbReference type="CCDS" id="CCDS6237.1"/>
<dbReference type="PIR" id="JQ0786">
    <property type="entry name" value="CRHU1"/>
</dbReference>
<dbReference type="RefSeq" id="NP_001122301.1">
    <property type="nucleotide sequence ID" value="NM_001128829.4"/>
</dbReference>
<dbReference type="RefSeq" id="NP_001122302.1">
    <property type="nucleotide sequence ID" value="NM_001128830.4"/>
</dbReference>
<dbReference type="RefSeq" id="NP_001122303.1">
    <property type="nucleotide sequence ID" value="NM_001128831.4"/>
</dbReference>
<dbReference type="RefSeq" id="NP_001158302.1">
    <property type="nucleotide sequence ID" value="NM_001164830.2"/>
</dbReference>
<dbReference type="RefSeq" id="NP_001729.1">
    <property type="nucleotide sequence ID" value="NM_001738.5"/>
</dbReference>
<dbReference type="PDB" id="1AZM">
    <property type="method" value="X-ray"/>
    <property type="resolution" value="2.00 A"/>
    <property type="chains" value="A=2-261"/>
</dbReference>
<dbReference type="PDB" id="1BZM">
    <property type="method" value="X-ray"/>
    <property type="resolution" value="2.00 A"/>
    <property type="chains" value="A=2-261"/>
</dbReference>
<dbReference type="PDB" id="1CRM">
    <property type="method" value="X-ray"/>
    <property type="resolution" value="2.00 A"/>
    <property type="chains" value="A=2-261"/>
</dbReference>
<dbReference type="PDB" id="1CZM">
    <property type="method" value="X-ray"/>
    <property type="resolution" value="2.00 A"/>
    <property type="chains" value="A=2-261"/>
</dbReference>
<dbReference type="PDB" id="1HCB">
    <property type="method" value="X-ray"/>
    <property type="resolution" value="1.60 A"/>
    <property type="chains" value="A=2-261"/>
</dbReference>
<dbReference type="PDB" id="1HUG">
    <property type="method" value="X-ray"/>
    <property type="resolution" value="2.00 A"/>
    <property type="chains" value="A=2-261"/>
</dbReference>
<dbReference type="PDB" id="1HUH">
    <property type="method" value="X-ray"/>
    <property type="resolution" value="2.20 A"/>
    <property type="chains" value="A=2-261"/>
</dbReference>
<dbReference type="PDB" id="1J9W">
    <property type="method" value="X-ray"/>
    <property type="resolution" value="2.60 A"/>
    <property type="chains" value="A/B=2-261"/>
</dbReference>
<dbReference type="PDB" id="1JV0">
    <property type="method" value="X-ray"/>
    <property type="resolution" value="2.00 A"/>
    <property type="chains" value="A/B=2-261"/>
</dbReference>
<dbReference type="PDB" id="2CAB">
    <property type="method" value="X-ray"/>
    <property type="resolution" value="2.00 A"/>
    <property type="chains" value="A=2-261"/>
</dbReference>
<dbReference type="PDB" id="2FOY">
    <property type="method" value="X-ray"/>
    <property type="resolution" value="1.55 A"/>
    <property type="chains" value="A/B=2-261"/>
</dbReference>
<dbReference type="PDB" id="2FW4">
    <property type="method" value="X-ray"/>
    <property type="resolution" value="2.00 A"/>
    <property type="chains" value="A/B=2-261"/>
</dbReference>
<dbReference type="PDB" id="2IT4">
    <property type="method" value="X-ray"/>
    <property type="resolution" value="2.00 A"/>
    <property type="chains" value="A/B=6-261"/>
</dbReference>
<dbReference type="PDB" id="2NMX">
    <property type="method" value="X-ray"/>
    <property type="resolution" value="1.55 A"/>
    <property type="chains" value="A/B=2-261"/>
</dbReference>
<dbReference type="PDB" id="2NN1">
    <property type="method" value="X-ray"/>
    <property type="resolution" value="1.65 A"/>
    <property type="chains" value="A/B=2-261"/>
</dbReference>
<dbReference type="PDB" id="2NN7">
    <property type="method" value="X-ray"/>
    <property type="resolution" value="1.85 A"/>
    <property type="chains" value="A/B=2-261"/>
</dbReference>
<dbReference type="PDB" id="3LXE">
    <property type="method" value="X-ray"/>
    <property type="resolution" value="1.90 A"/>
    <property type="chains" value="A/B=2-261"/>
</dbReference>
<dbReference type="PDB" id="3W6H">
    <property type="method" value="X-ray"/>
    <property type="resolution" value="2.96 A"/>
    <property type="chains" value="A/B=2-261"/>
</dbReference>
<dbReference type="PDB" id="3W6I">
    <property type="method" value="X-ray"/>
    <property type="resolution" value="2.69 A"/>
    <property type="chains" value="A/E=2-261"/>
</dbReference>
<dbReference type="PDB" id="4WR7">
    <property type="method" value="X-ray"/>
    <property type="resolution" value="1.50 A"/>
    <property type="chains" value="A/B=3-261"/>
</dbReference>
<dbReference type="PDB" id="4WUP">
    <property type="method" value="X-ray"/>
    <property type="resolution" value="1.75 A"/>
    <property type="chains" value="A/B=3-261"/>
</dbReference>
<dbReference type="PDB" id="4WUQ">
    <property type="method" value="X-ray"/>
    <property type="resolution" value="1.75 A"/>
    <property type="chains" value="A/B=3-261"/>
</dbReference>
<dbReference type="PDB" id="5E2M">
    <property type="method" value="X-ray"/>
    <property type="resolution" value="1.41 A"/>
    <property type="chains" value="A/B=3-261"/>
</dbReference>
<dbReference type="PDB" id="5GMM">
    <property type="method" value="X-ray"/>
    <property type="resolution" value="2.00 A"/>
    <property type="chains" value="A/B=1-261"/>
</dbReference>
<dbReference type="PDB" id="6EVR">
    <property type="method" value="X-ray"/>
    <property type="resolution" value="1.50 A"/>
    <property type="chains" value="A/B=1-261"/>
</dbReference>
<dbReference type="PDB" id="6EX1">
    <property type="method" value="X-ray"/>
    <property type="resolution" value="1.60 A"/>
    <property type="chains" value="A/B=1-261"/>
</dbReference>
<dbReference type="PDB" id="6F3B">
    <property type="method" value="X-ray"/>
    <property type="resolution" value="1.40 A"/>
    <property type="chains" value="A/B=1-261"/>
</dbReference>
<dbReference type="PDB" id="6FAF">
    <property type="method" value="X-ray"/>
    <property type="resolution" value="1.99 A"/>
    <property type="chains" value="A/B=1-261"/>
</dbReference>
<dbReference type="PDB" id="6FAG">
    <property type="method" value="X-ray"/>
    <property type="resolution" value="1.79 A"/>
    <property type="chains" value="A/B=1-261"/>
</dbReference>
<dbReference type="PDB" id="6G3V">
    <property type="method" value="X-ray"/>
    <property type="resolution" value="1.69 A"/>
    <property type="chains" value="A/B=1-261"/>
</dbReference>
<dbReference type="PDB" id="6HWZ">
    <property type="method" value="X-ray"/>
    <property type="resolution" value="1.64 A"/>
    <property type="chains" value="A/B=1-261"/>
</dbReference>
<dbReference type="PDB" id="6I0J">
    <property type="method" value="X-ray"/>
    <property type="resolution" value="1.35 A"/>
    <property type="chains" value="A/B=1-261"/>
</dbReference>
<dbReference type="PDB" id="6I0L">
    <property type="method" value="X-ray"/>
    <property type="resolution" value="1.40 A"/>
    <property type="chains" value="A/B=1-261"/>
</dbReference>
<dbReference type="PDB" id="6SWM">
    <property type="method" value="X-ray"/>
    <property type="resolution" value="2.77 A"/>
    <property type="chains" value="A/B=1-261"/>
</dbReference>
<dbReference type="PDB" id="6XZE">
    <property type="method" value="X-ray"/>
    <property type="resolution" value="1.54 A"/>
    <property type="chains" value="A/B=1-261"/>
</dbReference>
<dbReference type="PDB" id="6XZO">
    <property type="method" value="X-ray"/>
    <property type="resolution" value="1.44 A"/>
    <property type="chains" value="A/B=1-261"/>
</dbReference>
<dbReference type="PDB" id="6XZS">
    <property type="method" value="X-ray"/>
    <property type="resolution" value="1.53 A"/>
    <property type="chains" value="A/B=1-261"/>
</dbReference>
<dbReference type="PDB" id="6XZX">
    <property type="method" value="X-ray"/>
    <property type="resolution" value="1.55 A"/>
    <property type="chains" value="A/B=1-261"/>
</dbReference>
<dbReference type="PDB" id="6XZY">
    <property type="method" value="X-ray"/>
    <property type="resolution" value="1.66 A"/>
    <property type="chains" value="A/B=1-261"/>
</dbReference>
<dbReference type="PDB" id="6Y00">
    <property type="method" value="X-ray"/>
    <property type="resolution" value="1.37 A"/>
    <property type="chains" value="A/B=1-261"/>
</dbReference>
<dbReference type="PDB" id="7PLF">
    <property type="method" value="X-ray"/>
    <property type="resolution" value="1.46 A"/>
    <property type="chains" value="AAA/BBB=1-261"/>
</dbReference>
<dbReference type="PDB" id="7Q0D">
    <property type="method" value="X-ray"/>
    <property type="resolution" value="1.24 A"/>
    <property type="chains" value="A/B=1-261"/>
</dbReference>
<dbReference type="PDB" id="7QOB">
    <property type="method" value="X-ray"/>
    <property type="resolution" value="1.80 A"/>
    <property type="chains" value="AAA/BBB=1-261"/>
</dbReference>
<dbReference type="PDB" id="7ZL5">
    <property type="method" value="X-ray"/>
    <property type="resolution" value="1.48 A"/>
    <property type="chains" value="AAA/BBB=1-261"/>
</dbReference>
<dbReference type="PDB" id="8CDX">
    <property type="method" value="X-ray"/>
    <property type="resolution" value="1.33 A"/>
    <property type="chains" value="AAA/BBB=1-261"/>
</dbReference>
<dbReference type="PDB" id="8CDZ">
    <property type="method" value="X-ray"/>
    <property type="resolution" value="1.44 A"/>
    <property type="chains" value="AAA/BBB=1-261"/>
</dbReference>
<dbReference type="PDB" id="8Q6L">
    <property type="method" value="X-ray"/>
    <property type="resolution" value="1.72 A"/>
    <property type="chains" value="AAA/BBB=1-261"/>
</dbReference>
<dbReference type="PDB" id="8Q7G">
    <property type="method" value="X-ray"/>
    <property type="resolution" value="1.43 A"/>
    <property type="chains" value="AAA/BBB=1-261"/>
</dbReference>
<dbReference type="PDB" id="8QGV">
    <property type="method" value="X-ray"/>
    <property type="resolution" value="1.84 A"/>
    <property type="chains" value="AAA/BBB=1-261"/>
</dbReference>
<dbReference type="PDB" id="8QQ9">
    <property type="method" value="X-ray"/>
    <property type="resolution" value="2.00 A"/>
    <property type="chains" value="AAA/BBB=1-261"/>
</dbReference>
<dbReference type="PDB" id="8QUN">
    <property type="method" value="X-ray"/>
    <property type="resolution" value="1.61 A"/>
    <property type="chains" value="AAA/BBB=1-261"/>
</dbReference>
<dbReference type="PDB" id="8RLO">
    <property type="method" value="X-ray"/>
    <property type="resolution" value="1.55 A"/>
    <property type="chains" value="AAA/BBB=1-261"/>
</dbReference>
<dbReference type="PDB" id="8S4F">
    <property type="method" value="X-ray"/>
    <property type="resolution" value="1.39 A"/>
    <property type="chains" value="A/B=3-261"/>
</dbReference>
<dbReference type="PDBsum" id="1AZM"/>
<dbReference type="PDBsum" id="1BZM"/>
<dbReference type="PDBsum" id="1CRM"/>
<dbReference type="PDBsum" id="1CZM"/>
<dbReference type="PDBsum" id="1HCB"/>
<dbReference type="PDBsum" id="1HUG"/>
<dbReference type="PDBsum" id="1HUH"/>
<dbReference type="PDBsum" id="1J9W"/>
<dbReference type="PDBsum" id="1JV0"/>
<dbReference type="PDBsum" id="2CAB"/>
<dbReference type="PDBsum" id="2FOY"/>
<dbReference type="PDBsum" id="2FW4"/>
<dbReference type="PDBsum" id="2IT4"/>
<dbReference type="PDBsum" id="2NMX"/>
<dbReference type="PDBsum" id="2NN1"/>
<dbReference type="PDBsum" id="2NN7"/>
<dbReference type="PDBsum" id="3LXE"/>
<dbReference type="PDBsum" id="3W6H"/>
<dbReference type="PDBsum" id="3W6I"/>
<dbReference type="PDBsum" id="4WR7"/>
<dbReference type="PDBsum" id="4WUP"/>
<dbReference type="PDBsum" id="4WUQ"/>
<dbReference type="PDBsum" id="5E2M"/>
<dbReference type="PDBsum" id="5GMM"/>
<dbReference type="PDBsum" id="6EVR"/>
<dbReference type="PDBsum" id="6EX1"/>
<dbReference type="PDBsum" id="6F3B"/>
<dbReference type="PDBsum" id="6FAF"/>
<dbReference type="PDBsum" id="6FAG"/>
<dbReference type="PDBsum" id="6G3V"/>
<dbReference type="PDBsum" id="6HWZ"/>
<dbReference type="PDBsum" id="6I0J"/>
<dbReference type="PDBsum" id="6I0L"/>
<dbReference type="PDBsum" id="6SWM"/>
<dbReference type="PDBsum" id="6XZE"/>
<dbReference type="PDBsum" id="6XZO"/>
<dbReference type="PDBsum" id="6XZS"/>
<dbReference type="PDBsum" id="6XZX"/>
<dbReference type="PDBsum" id="6XZY"/>
<dbReference type="PDBsum" id="6Y00"/>
<dbReference type="PDBsum" id="7PLF"/>
<dbReference type="PDBsum" id="7Q0D"/>
<dbReference type="PDBsum" id="7QOB"/>
<dbReference type="PDBsum" id="7ZL5"/>
<dbReference type="PDBsum" id="8CDX"/>
<dbReference type="PDBsum" id="8CDZ"/>
<dbReference type="PDBsum" id="8Q6L"/>
<dbReference type="PDBsum" id="8Q7G"/>
<dbReference type="PDBsum" id="8QGV"/>
<dbReference type="PDBsum" id="8QQ9"/>
<dbReference type="PDBsum" id="8QUN"/>
<dbReference type="PDBsum" id="8RLO"/>
<dbReference type="PDBsum" id="8S4F"/>
<dbReference type="BMRB" id="P00915"/>
<dbReference type="PCDDB" id="P00915"/>
<dbReference type="SMR" id="P00915"/>
<dbReference type="BioGRID" id="107214">
    <property type="interactions" value="11"/>
</dbReference>
<dbReference type="FunCoup" id="P00915">
    <property type="interactions" value="166"/>
</dbReference>
<dbReference type="IntAct" id="P00915">
    <property type="interactions" value="8"/>
</dbReference>
<dbReference type="MINT" id="P00915"/>
<dbReference type="STRING" id="9606.ENSP00000430656"/>
<dbReference type="BindingDB" id="P00915"/>
<dbReference type="ChEMBL" id="CHEMBL261"/>
<dbReference type="DrugBank" id="DB08156">
    <property type="generic name" value="3-[4-(AMINOSULFONYL)PHENYL]PROPANOIC ACID"/>
</dbReference>
<dbReference type="DrugBank" id="DB08782">
    <property type="generic name" value="4-(2-AMINOETHYL)BENZENESULFONAMIDE"/>
</dbReference>
<dbReference type="DrugBank" id="DB04214">
    <property type="generic name" value="4-Nitrophenyl Phosphate"/>
</dbReference>
<dbReference type="DrugBank" id="DB07050">
    <property type="generic name" value="5-[(phenylsulfonyl)amino]-1,3,4-thiadiazole-2-sulfonamide"/>
</dbReference>
<dbReference type="DrugBank" id="DB12348">
    <property type="generic name" value="5-amino-1,3,4-thiadiazole-2-thiol"/>
</dbReference>
<dbReference type="DrugBank" id="DB00819">
    <property type="generic name" value="Acetazolamide"/>
</dbReference>
<dbReference type="DrugBank" id="DB00381">
    <property type="generic name" value="Amlodipine"/>
</dbReference>
<dbReference type="DrugBank" id="DB00436">
    <property type="generic name" value="Bendroflumethiazide"/>
</dbReference>
<dbReference type="DrugBank" id="DB00562">
    <property type="generic name" value="Benzthiazide"/>
</dbReference>
<dbReference type="DrugBank" id="DB01194">
    <property type="generic name" value="Brinzolamide"/>
</dbReference>
<dbReference type="DrugBank" id="DB03854">
    <property type="generic name" value="Cadaverine"/>
</dbReference>
<dbReference type="DrugBank" id="DB00880">
    <property type="generic name" value="Chlorothiazide"/>
</dbReference>
<dbReference type="DrugBank" id="DB00310">
    <property type="generic name" value="Chlorthalidone"/>
</dbReference>
<dbReference type="DrugBank" id="DB14086">
    <property type="generic name" value="Cianidanol"/>
</dbReference>
<dbReference type="DrugBank" id="DB04665">
    <property type="generic name" value="Coumarin"/>
</dbReference>
<dbReference type="DrugBank" id="DB11672">
    <property type="generic name" value="Curcumin"/>
</dbReference>
<dbReference type="DrugBank" id="DB00606">
    <property type="generic name" value="Cyclothiazide"/>
</dbReference>
<dbReference type="DrugBank" id="DB01144">
    <property type="generic name" value="Diclofenamide"/>
</dbReference>
<dbReference type="DrugBank" id="DB00869">
    <property type="generic name" value="Dorzolamide"/>
</dbReference>
<dbReference type="DrugBank" id="DB08846">
    <property type="generic name" value="Ellagic acid"/>
</dbReference>
<dbReference type="DrugBank" id="DB01031">
    <property type="generic name" value="Ethinamate"/>
</dbReference>
<dbReference type="DrugBank" id="DB00311">
    <property type="generic name" value="Ethoxzolamide"/>
</dbReference>
<dbReference type="DrugBank" id="DB08157">
    <property type="generic name" value="ETHYL 3-[4-(AMINOSULFONYL)PHENYL]PROPANOATE"/>
</dbReference>
<dbReference type="DrugBank" id="DB07767">
    <property type="generic name" value="Ferulic acid"/>
</dbReference>
<dbReference type="DrugBank" id="DB03260">
    <property type="generic name" value="Hexamethylene diamine"/>
</dbReference>
<dbReference type="DrugBank" id="DB00774">
    <property type="generic name" value="Hydroflumethiazide"/>
</dbReference>
<dbReference type="DrugBank" id="DB08165">
    <property type="generic name" value="indane-5-sulfonamide"/>
</dbReference>
<dbReference type="DrugBank" id="DB12754">
    <property type="generic name" value="Iodide"/>
</dbReference>
<dbReference type="DrugBank" id="DB00703">
    <property type="generic name" value="Methazolamide"/>
</dbReference>
<dbReference type="DrugBank" id="DB00423">
    <property type="generic name" value="Methocarbamol"/>
</dbReference>
<dbReference type="DrugBank" id="DB00232">
    <property type="generic name" value="Methyclothiazide"/>
</dbReference>
<dbReference type="DrugBank" id="DB07476">
    <property type="generic name" value="N-[4-(AMINOSULFONYL)PHENYL]-2-MERCAPTOBENZAMIDE"/>
</dbReference>
<dbReference type="DrugBank" id="DB08155">
    <property type="generic name" value="N-{2-[4-(AMINOSULFONYL)PHENYL]ETHYL}ACETAMIDE"/>
</dbReference>
<dbReference type="DrugBank" id="DB14049">
    <property type="generic name" value="Nitrate"/>
</dbReference>
<dbReference type="DrugBank" id="DB04066">
    <property type="generic name" value="p-Coumaric acid"/>
</dbReference>
<dbReference type="DrugBank" id="DB13495">
    <property type="generic name" value="Paraoxon"/>
</dbReference>
<dbReference type="DrugBank" id="DB03255">
    <property type="generic name" value="Phenol"/>
</dbReference>
<dbReference type="DrugBank" id="DB01795">
    <property type="generic name" value="Phenylboronic acid"/>
</dbReference>
<dbReference type="DrugBank" id="DB01963">
    <property type="generic name" value="Phenylethane Boronic Acid"/>
</dbReference>
<dbReference type="DrugBank" id="DB12399">
    <property type="generic name" value="Polmacoxib"/>
</dbReference>
<dbReference type="DrugBank" id="DB01325">
    <property type="generic name" value="Quinethazone"/>
</dbReference>
<dbReference type="DrugBank" id="DB12418">
    <property type="generic name" value="Saccharin"/>
</dbReference>
<dbReference type="DrugBank" id="DB00936">
    <property type="generic name" value="Salicylic acid"/>
</dbReference>
<dbReference type="DrugBank" id="DB09460">
    <property type="generic name" value="Sodium carbonate"/>
</dbReference>
<dbReference type="DrugBank" id="DB09472">
    <property type="generic name" value="Sodium sulfate"/>
</dbReference>
<dbReference type="DrugBank" id="DB14546">
    <property type="generic name" value="Sulfate ion"/>
</dbReference>
<dbReference type="DrugBank" id="DB00273">
    <property type="generic name" value="Topiramate"/>
</dbReference>
<dbReference type="DrugBank" id="DB01650">
    <property type="generic name" value="trans-2-hydroxycinnamic acid"/>
</dbReference>
<dbReference type="DrugBank" id="DB01021">
    <property type="generic name" value="Trichlormethiazide"/>
</dbReference>
<dbReference type="DrugBank" id="DB01593">
    <property type="generic name" value="Zinc"/>
</dbReference>
<dbReference type="DrugBank" id="DB14487">
    <property type="generic name" value="Zinc acetate"/>
</dbReference>
<dbReference type="DrugBank" id="DB00909">
    <property type="generic name" value="Zonisamide"/>
</dbReference>
<dbReference type="DrugCentral" id="P00915"/>
<dbReference type="GuidetoPHARMACOLOGY" id="2597"/>
<dbReference type="GlyConnect" id="2846">
    <property type="glycosylation" value="1 O-GlcNAc glycan (2 sites)"/>
</dbReference>
<dbReference type="GlyCosmos" id="P00915">
    <property type="glycosylation" value="2 sites, 1 glycan"/>
</dbReference>
<dbReference type="GlyGen" id="P00915">
    <property type="glycosylation" value="2 sites, 1 O-linked glycan (2 sites)"/>
</dbReference>
<dbReference type="iPTMnet" id="P00915"/>
<dbReference type="PhosphoSitePlus" id="P00915"/>
<dbReference type="BioMuta" id="CA1"/>
<dbReference type="DMDM" id="115449"/>
<dbReference type="REPRODUCTION-2DPAGE" id="IPI00215983"/>
<dbReference type="REPRODUCTION-2DPAGE" id="P00915"/>
<dbReference type="CPTAC" id="CPTAC-1302"/>
<dbReference type="CPTAC" id="non-CPTAC-1091"/>
<dbReference type="jPOST" id="P00915"/>
<dbReference type="MassIVE" id="P00915"/>
<dbReference type="PaxDb" id="9606-ENSP00000430656"/>
<dbReference type="PeptideAtlas" id="P00915"/>
<dbReference type="ProteomicsDB" id="51291"/>
<dbReference type="Pumba" id="P00915"/>
<dbReference type="TopDownProteomics" id="P00915"/>
<dbReference type="Antibodypedia" id="1380">
    <property type="antibodies" value="646 antibodies from 42 providers"/>
</dbReference>
<dbReference type="DNASU" id="759"/>
<dbReference type="Ensembl" id="ENST00000431316.3">
    <property type="protein sequence ID" value="ENSP00000392338.1"/>
    <property type="gene ID" value="ENSG00000133742.14"/>
</dbReference>
<dbReference type="Ensembl" id="ENST00000523022.6">
    <property type="protein sequence ID" value="ENSP00000429798.1"/>
    <property type="gene ID" value="ENSG00000133742.14"/>
</dbReference>
<dbReference type="Ensembl" id="ENST00000523953.5">
    <property type="protein sequence ID" value="ENSP00000430656.1"/>
    <property type="gene ID" value="ENSG00000133742.14"/>
</dbReference>
<dbReference type="Ensembl" id="ENST00000542576.5">
    <property type="protein sequence ID" value="ENSP00000443517.1"/>
    <property type="gene ID" value="ENSG00000133742.14"/>
</dbReference>
<dbReference type="GeneID" id="759"/>
<dbReference type="KEGG" id="hsa:759"/>
<dbReference type="MANE-Select" id="ENST00000523022.6">
    <property type="protein sequence ID" value="ENSP00000429798.1"/>
    <property type="RefSeq nucleotide sequence ID" value="NM_001128831.4"/>
    <property type="RefSeq protein sequence ID" value="NP_001122303.1"/>
</dbReference>
<dbReference type="AGR" id="HGNC:1368"/>
<dbReference type="CTD" id="759"/>
<dbReference type="DisGeNET" id="759"/>
<dbReference type="GeneCards" id="CA1"/>
<dbReference type="HGNC" id="HGNC:1368">
    <property type="gene designation" value="CA1"/>
</dbReference>
<dbReference type="HPA" id="ENSG00000133742">
    <property type="expression patterns" value="Group enriched (bone marrow, intestine)"/>
</dbReference>
<dbReference type="MIM" id="114800">
    <property type="type" value="gene"/>
</dbReference>
<dbReference type="neXtProt" id="NX_P00915"/>
<dbReference type="OpenTargets" id="ENSG00000133742"/>
<dbReference type="PharmGKB" id="PA25984"/>
<dbReference type="VEuPathDB" id="HostDB:ENSG00000133742"/>
<dbReference type="eggNOG" id="KOG0382">
    <property type="taxonomic scope" value="Eukaryota"/>
</dbReference>
<dbReference type="GeneTree" id="ENSGT00940000161270"/>
<dbReference type="InParanoid" id="P00915"/>
<dbReference type="OMA" id="YAMEAHL"/>
<dbReference type="OrthoDB" id="429145at2759"/>
<dbReference type="PAN-GO" id="P00915">
    <property type="GO annotations" value="3 GO annotations based on evolutionary models"/>
</dbReference>
<dbReference type="PhylomeDB" id="P00915"/>
<dbReference type="TreeFam" id="TF316425"/>
<dbReference type="BioCyc" id="MetaCyc:HS05785-MONOMER"/>
<dbReference type="BRENDA" id="4.2.1.1">
    <property type="organism ID" value="2681"/>
</dbReference>
<dbReference type="PathwayCommons" id="P00915"/>
<dbReference type="Reactome" id="R-HSA-1237044">
    <property type="pathway name" value="Erythrocytes take up carbon dioxide and release oxygen"/>
</dbReference>
<dbReference type="Reactome" id="R-HSA-1247673">
    <property type="pathway name" value="Erythrocytes take up oxygen and release carbon dioxide"/>
</dbReference>
<dbReference type="Reactome" id="R-HSA-1475029">
    <property type="pathway name" value="Reversible hydration of carbon dioxide"/>
</dbReference>
<dbReference type="Reactome" id="R-HSA-8950505">
    <property type="pathway name" value="Gene and protein expression by JAK-STAT signaling after Interleukin-12 stimulation"/>
</dbReference>
<dbReference type="SABIO-RK" id="P00915"/>
<dbReference type="SignaLink" id="P00915"/>
<dbReference type="BioGRID-ORCS" id="759">
    <property type="hits" value="11 hits in 1160 CRISPR screens"/>
</dbReference>
<dbReference type="CD-CODE" id="FB4E32DD">
    <property type="entry name" value="Presynaptic clusters and postsynaptic densities"/>
</dbReference>
<dbReference type="ChiTaRS" id="CA1">
    <property type="organism name" value="human"/>
</dbReference>
<dbReference type="EvolutionaryTrace" id="P00915"/>
<dbReference type="GeneWiki" id="CA1_(gene)"/>
<dbReference type="GenomeRNAi" id="759"/>
<dbReference type="Pharos" id="P00915">
    <property type="development level" value="Tclin"/>
</dbReference>
<dbReference type="PRO" id="PR:P00915"/>
<dbReference type="Proteomes" id="UP000005640">
    <property type="component" value="Chromosome 8"/>
</dbReference>
<dbReference type="RNAct" id="P00915">
    <property type="molecule type" value="protein"/>
</dbReference>
<dbReference type="Bgee" id="ENSG00000133742">
    <property type="expression patterns" value="Expressed in mucosa of transverse colon and 121 other cell types or tissues"/>
</dbReference>
<dbReference type="ExpressionAtlas" id="P00915">
    <property type="expression patterns" value="baseline and differential"/>
</dbReference>
<dbReference type="GO" id="GO:0005737">
    <property type="term" value="C:cytoplasm"/>
    <property type="evidence" value="ECO:0000318"/>
    <property type="project" value="GO_Central"/>
</dbReference>
<dbReference type="GO" id="GO:0005829">
    <property type="term" value="C:cytosol"/>
    <property type="evidence" value="ECO:0000304"/>
    <property type="project" value="Reactome"/>
</dbReference>
<dbReference type="GO" id="GO:0070062">
    <property type="term" value="C:extracellular exosome"/>
    <property type="evidence" value="ECO:0007005"/>
    <property type="project" value="UniProtKB"/>
</dbReference>
<dbReference type="GO" id="GO:0004064">
    <property type="term" value="F:arylesterase activity"/>
    <property type="evidence" value="ECO:0000315"/>
    <property type="project" value="CACAO"/>
</dbReference>
<dbReference type="GO" id="GO:0004089">
    <property type="term" value="F:carbonate dehydratase activity"/>
    <property type="evidence" value="ECO:0000314"/>
    <property type="project" value="UniProtKB"/>
</dbReference>
<dbReference type="GO" id="GO:0018820">
    <property type="term" value="F:cyanamide hydratase activity"/>
    <property type="evidence" value="ECO:0000314"/>
    <property type="project" value="UniProtKB"/>
</dbReference>
<dbReference type="GO" id="GO:0016836">
    <property type="term" value="F:hydro-lyase activity"/>
    <property type="evidence" value="ECO:0000314"/>
    <property type="project" value="CACAO"/>
</dbReference>
<dbReference type="GO" id="GO:0008270">
    <property type="term" value="F:zinc ion binding"/>
    <property type="evidence" value="ECO:0007669"/>
    <property type="project" value="InterPro"/>
</dbReference>
<dbReference type="FunFam" id="3.10.200.10:FF:000001">
    <property type="entry name" value="Carbonic anhydrase 2"/>
    <property type="match status" value="1"/>
</dbReference>
<dbReference type="Gene3D" id="3.10.200.10">
    <property type="entry name" value="Alpha carbonic anhydrase"/>
    <property type="match status" value="1"/>
</dbReference>
<dbReference type="InterPro" id="IPR001148">
    <property type="entry name" value="CA_dom"/>
</dbReference>
<dbReference type="InterPro" id="IPR036398">
    <property type="entry name" value="CA_dom_sf"/>
</dbReference>
<dbReference type="InterPro" id="IPR023561">
    <property type="entry name" value="Carbonic_anhydrase_a-class"/>
</dbReference>
<dbReference type="InterPro" id="IPR018338">
    <property type="entry name" value="Carbonic_anhydrase_a-class_CS"/>
</dbReference>
<dbReference type="PANTHER" id="PTHR18952">
    <property type="entry name" value="CARBONIC ANHYDRASE"/>
    <property type="match status" value="1"/>
</dbReference>
<dbReference type="PANTHER" id="PTHR18952:SF282">
    <property type="entry name" value="CARBONIC ANHYDRASE 1"/>
    <property type="match status" value="1"/>
</dbReference>
<dbReference type="Pfam" id="PF00194">
    <property type="entry name" value="Carb_anhydrase"/>
    <property type="match status" value="1"/>
</dbReference>
<dbReference type="SMART" id="SM01057">
    <property type="entry name" value="Carb_anhydrase"/>
    <property type="match status" value="1"/>
</dbReference>
<dbReference type="SUPFAM" id="SSF51069">
    <property type="entry name" value="Carbonic anhydrase"/>
    <property type="match status" value="1"/>
</dbReference>
<dbReference type="PROSITE" id="PS00162">
    <property type="entry name" value="ALPHA_CA_1"/>
    <property type="match status" value="1"/>
</dbReference>
<dbReference type="PROSITE" id="PS51144">
    <property type="entry name" value="ALPHA_CA_2"/>
    <property type="match status" value="1"/>
</dbReference>
<protein>
    <recommendedName>
        <fullName>Carbonic anhydrase 1</fullName>
        <ecNumber evidence="5 9 10 12 16 17">4.2.1.1</ecNumber>
    </recommendedName>
    <alternativeName>
        <fullName>Carbonate dehydratase I</fullName>
    </alternativeName>
    <alternativeName>
        <fullName>Carbonic anhydrase B</fullName>
        <shortName>CAB</shortName>
    </alternativeName>
    <alternativeName>
        <fullName>Carbonic anhydrase I</fullName>
        <shortName>CA-I</shortName>
    </alternativeName>
    <alternativeName>
        <fullName evidence="26">Cyanamide hydratase CA1</fullName>
        <ecNumber evidence="5">4.2.1.69</ecNumber>
    </alternativeName>
</protein>
<accession>P00915</accession>
<gene>
    <name type="primary">CA1</name>
</gene>
<reference key="1">
    <citation type="journal article" date="1987" name="Nucleic Acids Res.">
        <title>Human carbonic anhydrase I cDNA.</title>
        <authorList>
            <person name="Barlow J.H."/>
            <person name="Lowe N."/>
            <person name="Edwards Y.H."/>
            <person name="Butterworth P.H.W."/>
        </authorList>
    </citation>
    <scope>NUCLEOTIDE SEQUENCE [MRNA]</scope>
</reference>
<reference key="2">
    <citation type="journal article" date="1990" name="Gene">
        <title>Structure and methylation patterns of the gene encoding human carbonic anhydrase I.</title>
        <authorList>
            <person name="Lowe N."/>
            <person name="Brady H.J.M."/>
            <person name="Barlow J.H."/>
            <person name="Sowden J.C."/>
            <person name="Edwards M."/>
            <person name="Butterworth P.H.W."/>
        </authorList>
    </citation>
    <scope>NUCLEOTIDE SEQUENCE [MRNA]</scope>
</reference>
<reference key="3">
    <citation type="journal article" date="2004" name="Genome Res.">
        <title>The status, quality, and expansion of the NIH full-length cDNA project: the Mammalian Gene Collection (MGC).</title>
        <authorList>
            <consortium name="The MGC Project Team"/>
        </authorList>
    </citation>
    <scope>NUCLEOTIDE SEQUENCE [LARGE SCALE MRNA]</scope>
    <source>
        <tissue>Pancreas</tissue>
        <tissue>Spleen</tissue>
    </source>
</reference>
<reference key="4">
    <citation type="journal article" date="1974" name="Biochimie">
        <title>Primary structure of human B erythrocyte carbonic anhydrase. 3. Sequence of CNBr fragment I and III (residues 149-260).</title>
        <authorList>
            <person name="Giraud N."/>
            <person name="Marriq C."/>
            <person name="Laurent-Tabusse G."/>
        </authorList>
    </citation>
    <scope>PROTEIN SEQUENCE OF 2-261</scope>
    <scope>CLEAVAGE OF INITIATOR METHIONINE</scope>
    <scope>ACETYLATION AT ALA-2</scope>
</reference>
<reference key="5">
    <citation type="journal article" date="1972" name="Biochem. Biophys. Res. Commun.">
        <title>Amino acid sequence of human erythrocyte carbonic anhydrase B.</title>
        <authorList>
            <person name="Andersson B."/>
            <person name="Nyman P.O."/>
            <person name="Strid L."/>
        </authorList>
    </citation>
    <scope>PROTEIN SEQUENCE OF 20-261</scope>
</reference>
<reference key="6">
    <citation type="journal article" date="1973" name="J. Biol. Chem.">
        <title>Human carbonic anhydrases. XI. The complete primary structure of carbonic anhydrase B.</title>
        <authorList>
            <person name="Lin K.-T.D."/>
            <person name="Deutsch H.F."/>
        </authorList>
    </citation>
    <scope>PROTEIN SEQUENCE OF 12-261</scope>
</reference>
<reference key="7">
    <citation type="journal article" date="1974" name="J. Biol. Chem.">
        <title>Human carbonic anhydrases. XII. The complete primary structure of the C isozyme.</title>
        <authorList>
            <person name="Lin K.-T.D."/>
            <person name="Deutsch H.F."/>
        </authorList>
    </citation>
    <scope>SEQUENCE REVISION</scope>
</reference>
<reference key="8">
    <citation type="journal article" date="1999" name="J. Biol. Inorg. Chem.">
        <title>Carbonic anhydrase catalyzes cyanamide hydration to urea: is it mimicking the physiological reaction?</title>
        <authorList>
            <person name="Briganti F."/>
            <person name="Mangani S."/>
            <person name="Scozzafava A."/>
            <person name="Vernaglione G."/>
            <person name="Supuran C.T."/>
        </authorList>
    </citation>
    <scope>FUNCTION</scope>
    <scope>CATALYTIC ACTIVITY</scope>
    <scope>BIOPHYSICOCHEMICAL PROPERTIES</scope>
</reference>
<reference key="9">
    <citation type="journal article" date="2006" name="Chemistry">
        <title>Carbonic anhydrase activators. Activation of isozymes I, II, IV, VA, VII, and XIV with l- and d-histidine and crystallographic analysis of their adducts with isoform II: engineering proton-transfer processes within the active site of an enzyme.</title>
        <authorList>
            <person name="Temperini C."/>
            <person name="Scozzafava A."/>
            <person name="Vullo D."/>
            <person name="Supuran C.T."/>
        </authorList>
    </citation>
    <scope>ACTIVITY REGULATION</scope>
    <scope>FUNCTION</scope>
    <scope>CATALYTIC ACTIVITY</scope>
</reference>
<reference key="10">
    <citation type="journal article" date="2006" name="J. Med. Chem.">
        <title>Carbonic anhydrase activators. Activation of isoforms I, II, IV, VA, VII, and XIV with L- and D-phenylalanine and crystallographic analysis of their adducts with isozyme II: stereospecific recognition within the active site of an enzyme and its consequences for the drug design.</title>
        <authorList>
            <person name="Temperini C."/>
            <person name="Scozzafava A."/>
            <person name="Vullo D."/>
            <person name="Supuran C.T."/>
        </authorList>
    </citation>
    <scope>ACTIVITY REGULATION</scope>
    <scope>FUNCTION</scope>
    <scope>CATALYTIC ACTIVITY</scope>
</reference>
<reference key="11">
    <citation type="journal article" date="2007" name="Bioorg. Med. Chem. Lett.">
        <title>Carbonic anhydrase activators: L-Adrenaline plugs the active site entrance of isozyme II, activating better isoforms I, IV, VA, VII, and XIV.</title>
        <authorList>
            <person name="Temperini C."/>
            <person name="Innocenti A."/>
            <person name="Scozzafava A."/>
            <person name="Mastrolorenzo A."/>
            <person name="Supuran C.T."/>
        </authorList>
    </citation>
    <scope>ACTIVITY REGULATION</scope>
    <scope>FUNCTION</scope>
    <scope>CATALYTIC ACTIVITY</scope>
</reference>
<reference key="12">
    <citation type="journal article" date="2009" name="Bioorg. Med. Chem. Lett.">
        <title>A thiabendazole sulfonamide shows potent inhibitory activity against mammalian and nematode alpha-carbonic anhydrases.</title>
        <authorList>
            <person name="Crocetti L."/>
            <person name="Maresca A."/>
            <person name="Temperini C."/>
            <person name="Hall R.A."/>
            <person name="Scozzafava A."/>
            <person name="Muehlschlegel F.A."/>
            <person name="Supuran C.T."/>
        </authorList>
    </citation>
    <scope>ACTIVITY REGULATION</scope>
    <scope>FUNCTION</scope>
    <scope>CATALYTIC ACTIVITY</scope>
</reference>
<reference key="13">
    <citation type="journal article" date="2009" name="J. Am. Chem. Soc.">
        <title>Non-zinc mediated inhibition of carbonic anhydrases: coumarins are a new class of suicide inhibitors.</title>
        <authorList>
            <person name="Maresca A."/>
            <person name="Temperini C."/>
            <person name="Vu H."/>
            <person name="Pham N.B."/>
            <person name="Poulsen S.-A."/>
            <person name="Scozzafava A."/>
            <person name="Quinn R.J."/>
            <person name="Supuran C.T."/>
        </authorList>
    </citation>
    <scope>ACTIVITY REGULATION</scope>
    <scope>FUNCTION</scope>
    <scope>CATALYTIC ACTIVITY</scope>
</reference>
<reference key="14">
    <citation type="journal article" date="2009" name="Proteins">
        <title>Crystal structure of human carbonic anhydrase XIII and its complex with the inhibitor acetazolamide.</title>
        <authorList>
            <person name="Di Fiore A."/>
            <person name="Monti S.M."/>
            <person name="Hilvo M."/>
            <person name="Parkkila S."/>
            <person name="Romano V."/>
            <person name="Scaloni A."/>
            <person name="Pedone C."/>
            <person name="Scozzafava A."/>
            <person name="Supuran C.T."/>
            <person name="De Simone G."/>
        </authorList>
    </citation>
    <scope>FUNCTION</scope>
    <scope>CATALYTIC ACTIVITY</scope>
    <scope>BIOPHYSICOCHEMICAL PROPERTIES</scope>
    <scope>ACTIVITY REGULATION</scope>
</reference>
<reference key="15">
    <citation type="journal article" date="2011" name="BMC Syst. Biol.">
        <title>Initial characterization of the human central proteome.</title>
        <authorList>
            <person name="Burkard T.R."/>
            <person name="Planyavsky M."/>
            <person name="Kaupe I."/>
            <person name="Breitwieser F.P."/>
            <person name="Buerckstuemmer T."/>
            <person name="Bennett K.L."/>
            <person name="Superti-Furga G."/>
            <person name="Colinge J."/>
        </authorList>
    </citation>
    <scope>IDENTIFICATION BY MASS SPECTROMETRY [LARGE SCALE ANALYSIS]</scope>
</reference>
<reference key="16">
    <citation type="journal article" date="2014" name="J. Proteomics">
        <title>An enzyme assisted RP-RPLC approach for in-depth analysis of human liver phosphoproteome.</title>
        <authorList>
            <person name="Bian Y."/>
            <person name="Song C."/>
            <person name="Cheng K."/>
            <person name="Dong M."/>
            <person name="Wang F."/>
            <person name="Huang J."/>
            <person name="Sun D."/>
            <person name="Wang L."/>
            <person name="Ye M."/>
            <person name="Zou H."/>
        </authorList>
    </citation>
    <scope>IDENTIFICATION BY MASS SPECTROMETRY [LARGE SCALE ANALYSIS]</scope>
    <source>
        <tissue>Liver</tissue>
    </source>
</reference>
<reference key="17">
    <citation type="journal article" date="1972" name="J. Mol. Biol.">
        <title>Structure of human carbonic anhydrase B. I. Crystallization and heavy atom modifications.</title>
        <authorList>
            <person name="Kannan K.K."/>
            <person name="Fridborg K."/>
            <person name="Bergsten P.C."/>
            <person name="Liljas A."/>
            <person name="Loevgren S."/>
            <person name="Petef M."/>
            <person name="Strandberg B."/>
            <person name="Waara I."/>
            <person name="Adler L."/>
            <person name="Falkbring S.O."/>
            <person name="Goethe P.O."/>
            <person name="Nyman P.O."/>
        </authorList>
    </citation>
    <scope>X-RAY CRYSTALLOGRAPHY (2.00 ANGSTROMS) OF 2-260</scope>
</reference>
<reference key="18">
    <citation type="journal article" date="1975" name="Proc. Natl. Acad. Sci. U.S.A.">
        <title>Crystal structure of human erythrocyte carbonic anhydrase B. Three-dimensional structure at a nominal 2.2-A resolution.</title>
        <authorList>
            <person name="Kannan K.K."/>
            <person name="Notstrand B."/>
            <person name="Fridborg K."/>
            <person name="Loevgren S."/>
            <person name="Ohlsson A."/>
            <person name="Petef M."/>
        </authorList>
    </citation>
    <scope>X-RAY CRYSTALLOGRAPHY (2.2 ANGSTROMS)</scope>
</reference>
<reference key="19">
    <citation type="journal article" date="1984" name="Ann. N. Y. Acad. Sci.">
        <title>Structure, refinement, and function of carbonic anhydrase isozymes: refinement of human carbonic anhydrase I.</title>
        <authorList>
            <person name="Kannan K.K."/>
            <person name="Ramanadham M."/>
            <person name="Jones T.A."/>
        </authorList>
    </citation>
    <scope>X-RAY CRYSTALLOGRAPHY (2.00 ANGSTROMS) OF 2-260 IN COMPLEX WITH ZINC ION</scope>
</reference>
<reference key="20">
    <citation type="journal article" date="1994" name="Acta Crystallogr. D">
        <title>Differences in anionic inhibition of human carbonic anhydrase I revealed from the structures of iodide and gold cyanide inhibitor complexes.</title>
        <authorList>
            <person name="Kumar V."/>
            <person name="Kannan K.K."/>
            <person name="Sathyamurthi P."/>
        </authorList>
    </citation>
    <scope>X-RAY CRYSTALLOGRAPHY (2.00 ANGSTROMS) OF 2-260 IN COMPLEX WITH ZINC ION AND INHIBITORS</scope>
</reference>
<reference key="21">
    <citation type="journal article" date="1994" name="J. Mol. Biol.">
        <title>Enzyme-substrate interactions. Structure of human carbonic anhydrase I complexed with bicarbonate.</title>
        <authorList>
            <person name="Kumar V."/>
            <person name="Kannan K.K."/>
        </authorList>
    </citation>
    <scope>X-RAY CRYSTALLOGRAPHY (1.60 ANGSTROMS) OF 2-260 IN COMPLEX WITH ZINC ION AND BICARBONATE</scope>
</reference>
<reference key="22">
    <citation type="journal article" date="1994" name="J. Mol. Biol.">
        <title>Drug-protein interactions. Refined structures of three sulfonamide drug complexes of human carbonic anhydrase I enzyme.</title>
        <authorList>
            <person name="Chakravarty S."/>
            <person name="Kannan K.K."/>
        </authorList>
    </citation>
    <scope>X-RAY CRYSTALLOGRAPHY (2.00 ANGSTROMS) OF 2-260 IN COMPLEX WITH ZINC ION AND INHIBITORS</scope>
</reference>
<reference key="23">
    <citation type="journal article" date="2002" name="Biochemistry">
        <title>Crystal structure of a zinc-activated variant of human carbonic anhydrase I, CA I Michigan 1: evidence for a second zinc binding site involving arginine coordination.</title>
        <authorList>
            <person name="Ferraroni M."/>
            <person name="Tilli S."/>
            <person name="Briganti F."/>
            <person name="Chegwidden W.R."/>
            <person name="Supuran C.T."/>
            <person name="Wiebauer K.E."/>
            <person name="Tashian R.E."/>
            <person name="Scozzafava A."/>
        </authorList>
    </citation>
    <scope>X-RAY CRYSTALLOGRAPHY (2.00 ANGSTROMS) OF 2-260 IN COMPLEX WITH ZINC ION</scope>
    <scope>VARIANT MICHIGAN-1 ARG-68</scope>
</reference>
<reference key="24">
    <citation type="journal article" date="2006" name="Bioorg. Med. Chem. Lett.">
        <title>Carbonic anhydrase activators: the first X-ray crystallographic study of an adduct of isoform I.</title>
        <authorList>
            <person name="Temperini C."/>
            <person name="Scozzafava A."/>
            <person name="Supuran C.T."/>
        </authorList>
    </citation>
    <scope>X-RAY CRYSTALLOGRAPHY (2.00 ANGSTROMS) OF 2-260 IN COMPLEX WITH ZINC ION AND ACTIVATORS</scope>
    <scope>ACTIVATION BY IMIDAZOLE AND HISTIDINE</scope>
</reference>
<reference key="25">
    <citation type="journal article" date="2006" name="J. Am. Chem. Soc.">
        <title>Ultrahigh resolution crystal structures of human carbonic anhydrases I and II complexed with 'two-prong' inhibitors reveal the molecular basis of high affinity.</title>
        <authorList>
            <person name="Jude K.M."/>
            <person name="Banerjee A.L."/>
            <person name="Haldar M.K."/>
            <person name="Manokaran S."/>
            <person name="Roy B."/>
            <person name="Mallik S."/>
            <person name="Srivastava D.K."/>
            <person name="Christianson D.W."/>
        </authorList>
    </citation>
    <scope>X-RAY CRYSTALLOGRAPHY (1.55 ANGSTROMS) OF 2-260 IN COMPLEX WITH ZINC ION AND INHIBITORS</scope>
    <scope>ACTIVITY REGULATION</scope>
    <scope>FUNCTION</scope>
    <scope>CATALYTIC ACTIVITY</scope>
</reference>
<reference key="26">
    <citation type="journal article" date="2007" name="Bioorg. Med. Chem. Lett.">
        <title>Phosph(on)ate as a zinc-binding group in metalloenzyme inhibitors: X-ray crystal structure of the antiviral drug foscarnet complexed to human carbonic anhydrase I.</title>
        <authorList>
            <person name="Temperini C."/>
            <person name="Innocenti A."/>
            <person name="Guerri A."/>
            <person name="Scozzafava A."/>
            <person name="Rusconi S."/>
            <person name="Supuran C.T."/>
        </authorList>
    </citation>
    <scope>X-RAY CRYSTALLOGRAPHY (2.00 ANGSTROMS) OF 6-260 IN COMPLEX WITH ZINC ION AND THE ANTIVIRAL FOSCARNET</scope>
    <scope>ACTIVITY REGULATION</scope>
    <scope>FUNCTION</scope>
    <scope>CATALYTIC ACTIVITY</scope>
</reference>
<reference key="27">
    <citation type="journal article" date="2007" name="J. Am. Chem. Soc.">
        <title>Structural analysis of charge discrimination in the binding of inhibitors to human carbonic anhydrases I and II.</title>
        <authorList>
            <person name="Srivastava D.K."/>
            <person name="Jude K.M."/>
            <person name="Banerjee A.L."/>
            <person name="Haldar M."/>
            <person name="Manokaran S."/>
            <person name="Kooren J."/>
            <person name="Mallik S."/>
            <person name="Christianson D.W."/>
        </authorList>
    </citation>
    <scope>X-RAY CRYSTALLOGRAPHY (1.55 ANGSTROMS) OF 2-260 IN COMPLEX WITH ZINC ION AND INHIBITORS</scope>
    <scope>ACTIVITY REGULATION</scope>
    <scope>FUNCTION</scope>
    <scope>CATALYTIC ACTIVITY</scope>
</reference>
<reference key="28">
    <citation type="journal article" date="1981" name="Am. J. Hum. Genet.">
        <title>Population genetic studies of the Philippine Negritos. III. Identification of the carbonic anhydrase-1 variant with CA1 Guam.</title>
        <authorList>
            <person name="Omoto K."/>
            <person name="Ueda S."/>
            <person name="Goriki K."/>
            <person name="Takahashi N."/>
            <person name="Misawa S."/>
            <person name="Pagaran I.G."/>
        </authorList>
    </citation>
    <scope>VARIANT GUAM ARG-254</scope>
</reference>
<reference key="29">
    <citation type="journal article" date="1994" name="Hum. Mutat.">
        <title>Marked zinc activation of ester hydrolysis by a mutation, 67-His (CAT) to Arg (CGT), in the active site of human carbonic anhydrase I.</title>
        <authorList>
            <person name="Chegwidden W.R."/>
            <person name="Wagner L.E."/>
            <person name="Venta P.J."/>
            <person name="Bergenhem N.C.H."/>
            <person name="Yu Y.-S.L."/>
            <person name="Tashian R.E."/>
        </authorList>
    </citation>
    <scope>VARIANT MICHIGAN-1 ARG-68</scope>
</reference>
<evidence type="ECO:0000250" key="1">
    <source>
        <dbReference type="UniProtKB" id="B0BNN3"/>
    </source>
</evidence>
<evidence type="ECO:0000250" key="2">
    <source>
        <dbReference type="UniProtKB" id="P00918"/>
    </source>
</evidence>
<evidence type="ECO:0000255" key="3">
    <source>
        <dbReference type="PROSITE-ProRule" id="PRU01134"/>
    </source>
</evidence>
<evidence type="ECO:0000256" key="4">
    <source>
        <dbReference type="SAM" id="MobiDB-lite"/>
    </source>
</evidence>
<evidence type="ECO:0000269" key="5">
    <source>
    </source>
</evidence>
<evidence type="ECO:0000269" key="6">
    <source>
    </source>
</evidence>
<evidence type="ECO:0000269" key="7">
    <source>
    </source>
</evidence>
<evidence type="ECO:0000269" key="8">
    <source>
    </source>
</evidence>
<evidence type="ECO:0000269" key="9">
    <source>
    </source>
</evidence>
<evidence type="ECO:0000269" key="10">
    <source>
    </source>
</evidence>
<evidence type="ECO:0000269" key="11">
    <source>
    </source>
</evidence>
<evidence type="ECO:0000269" key="12">
    <source>
    </source>
</evidence>
<evidence type="ECO:0000269" key="13">
    <source>
    </source>
</evidence>
<evidence type="ECO:0000269" key="14">
    <source>
    </source>
</evidence>
<evidence type="ECO:0000269" key="15">
    <source>
    </source>
</evidence>
<evidence type="ECO:0000269" key="16">
    <source>
    </source>
</evidence>
<evidence type="ECO:0000269" key="17">
    <source>
    </source>
</evidence>
<evidence type="ECO:0000269" key="18">
    <source>
    </source>
</evidence>
<evidence type="ECO:0000269" key="19">
    <source>
    </source>
</evidence>
<evidence type="ECO:0000269" key="20">
    <source>
    </source>
</evidence>
<evidence type="ECO:0000269" key="21">
    <source>
    </source>
</evidence>
<evidence type="ECO:0000269" key="22">
    <source>
    </source>
</evidence>
<evidence type="ECO:0000269" key="23">
    <source>
    </source>
</evidence>
<evidence type="ECO:0000269" key="24">
    <source>
    </source>
</evidence>
<evidence type="ECO:0000269" key="25">
    <source>
    </source>
</evidence>
<evidence type="ECO:0000305" key="26"/>
<evidence type="ECO:0007829" key="27">
    <source>
        <dbReference type="PDB" id="1HCB"/>
    </source>
</evidence>
<evidence type="ECO:0007829" key="28">
    <source>
        <dbReference type="PDB" id="1J9W"/>
    </source>
</evidence>
<evidence type="ECO:0007829" key="29">
    <source>
        <dbReference type="PDB" id="7Q0D"/>
    </source>
</evidence>